<protein>
    <recommendedName>
        <fullName evidence="25">3 beta-hydroxysteroid dehydrogenase/Delta 5--&gt;4-isomerase type 2</fullName>
    </recommendedName>
    <alternativeName>
        <fullName>3 beta-hydroxysteroid dehydrogenase/Delta 5--&gt;4-isomerase type II</fullName>
        <shortName>3-beta-HSD II</shortName>
    </alternativeName>
    <alternativeName>
        <fullName>3-beta-HSD adrenal and gonadal type</fullName>
    </alternativeName>
    <domain>
        <recommendedName>
            <fullName>3-beta-hydroxy-Delta(5)-steroid dehydrogenase</fullName>
            <ecNumber evidence="12">1.1.1.145</ecNumber>
        </recommendedName>
        <alternativeName>
            <fullName>3-beta-hydroxy-5-ene steroid dehydrogenase</fullName>
        </alternativeName>
        <alternativeName>
            <fullName>Progesterone reductase</fullName>
        </alternativeName>
    </domain>
    <domain>
        <recommendedName>
            <fullName>Steroid Delta-isomerase</fullName>
            <ecNumber evidence="26">5.3.3.1</ecNumber>
        </recommendedName>
        <alternativeName>
            <fullName>Delta-5-3-ketosteroid isomerase</fullName>
        </alternativeName>
    </domain>
</protein>
<proteinExistence type="evidence at protein level"/>
<accession>P26439</accession>
<accession>A2RRA5</accession>
<accession>Q16010</accession>
<accession>Q53GD4</accession>
<accession>Q6AI10</accession>
<accession>Q6LDB9</accession>
<accession>Q99890</accession>
<accession>Q9UD08</accession>
<keyword id="KW-0025">Alternative splicing</keyword>
<keyword id="KW-0954">Congenital adrenal hyperplasia</keyword>
<keyword id="KW-0225">Disease variant</keyword>
<keyword id="KW-0256">Endoplasmic reticulum</keyword>
<keyword id="KW-0413">Isomerase</keyword>
<keyword id="KW-0443">Lipid metabolism</keyword>
<keyword id="KW-0472">Membrane</keyword>
<keyword id="KW-0496">Mitochondrion</keyword>
<keyword id="KW-0511">Multifunctional enzyme</keyword>
<keyword id="KW-0520">NAD</keyword>
<keyword id="KW-0560">Oxidoreductase</keyword>
<keyword id="KW-1267">Proteomics identification</keyword>
<keyword id="KW-1185">Reference proteome</keyword>
<keyword id="KW-0755">Steroidogenesis</keyword>
<keyword id="KW-0812">Transmembrane</keyword>
<keyword id="KW-1133">Transmembrane helix</keyword>
<sequence length="372" mass="42052">MGWSCLVTGAGGLLGQRIVRLLVEEKELKEIRALDKAFRPELREEFSKLQNRTKLTVLEGDILDEPFLKRACQDVSVVIHTACIIDVFGVTHRESIMNVNVKGTQLLLEACVQASVPVFIYTSSIEVAGPNSYKEIIQNGHEEEPLENTWPTPYPYSKKLAEKAVLAANGWNLKNGDTLYTCALRPTYIYGEGGPFLSASINEALNNNGILSSVGKFSTVNPVYVGNVAWAHILALRALRDPKKAPSVRGQFYYISDDTPHQSYDNLNYILSKEFGLRLDSRWSLPLTLMYWIGFLLEVVSFLLSPIYSYQPPFNRHTVTLSNSVFTFSYKKAQRDLAYKPLYSWEEAKQKTVEWVGSLVDRHKETLKSKTQ</sequence>
<dbReference type="EC" id="1.1.1.145" evidence="12"/>
<dbReference type="EC" id="5.3.3.1" evidence="26"/>
<dbReference type="EMBL" id="M77144">
    <property type="protein sequence ID" value="AAA36014.1"/>
    <property type="molecule type" value="Genomic_DNA"/>
</dbReference>
<dbReference type="EMBL" id="M67466">
    <property type="protein sequence ID" value="AAA36016.1"/>
    <property type="molecule type" value="mRNA"/>
</dbReference>
<dbReference type="EMBL" id="CR627415">
    <property type="protein sequence ID" value="CAH10504.1"/>
    <property type="molecule type" value="mRNA"/>
</dbReference>
<dbReference type="EMBL" id="AK222997">
    <property type="protein sequence ID" value="BAD96717.1"/>
    <property type="molecule type" value="mRNA"/>
</dbReference>
<dbReference type="EMBL" id="AL359553">
    <property type="status" value="NOT_ANNOTATED_CDS"/>
    <property type="molecule type" value="Genomic_DNA"/>
</dbReference>
<dbReference type="EMBL" id="CH471122">
    <property type="protein sequence ID" value="EAW56700.1"/>
    <property type="molecule type" value="Genomic_DNA"/>
</dbReference>
<dbReference type="EMBL" id="BC038419">
    <property type="protein sequence ID" value="AAH38419.1"/>
    <property type="molecule type" value="mRNA"/>
</dbReference>
<dbReference type="EMBL" id="BC131488">
    <property type="protein sequence ID" value="AAI31489.1"/>
    <property type="molecule type" value="mRNA"/>
</dbReference>
<dbReference type="EMBL" id="S80140">
    <property type="protein sequence ID" value="AAD14329.1"/>
    <property type="molecule type" value="Genomic_DNA"/>
</dbReference>
<dbReference type="EMBL" id="S60309">
    <property type="protein sequence ID" value="AAC60599.1"/>
    <property type="molecule type" value="Genomic_DNA"/>
</dbReference>
<dbReference type="EMBL" id="S60310">
    <property type="protein sequence ID" value="AAC60600.1"/>
    <property type="status" value="ALT_FRAME"/>
    <property type="molecule type" value="Genomic_DNA"/>
</dbReference>
<dbReference type="CCDS" id="CCDS902.1">
    <molecule id="P26439-1"/>
</dbReference>
<dbReference type="PIR" id="A39488">
    <property type="entry name" value="DEHUH2"/>
</dbReference>
<dbReference type="RefSeq" id="NP_000189.1">
    <molecule id="P26439-1"/>
    <property type="nucleotide sequence ID" value="NM_000198.4"/>
</dbReference>
<dbReference type="RefSeq" id="NP_001159592.1">
    <molecule id="P26439-1"/>
    <property type="nucleotide sequence ID" value="NM_001166120.2"/>
</dbReference>
<dbReference type="SMR" id="P26439"/>
<dbReference type="BioGRID" id="109517">
    <property type="interactions" value="21"/>
</dbReference>
<dbReference type="CORUM" id="P26439"/>
<dbReference type="FunCoup" id="P26439">
    <property type="interactions" value="96"/>
</dbReference>
<dbReference type="IntAct" id="P26439">
    <property type="interactions" value="20"/>
</dbReference>
<dbReference type="STRING" id="9606.ENSP00000445122"/>
<dbReference type="BindingDB" id="P26439"/>
<dbReference type="ChEMBL" id="CHEMBL3670"/>
<dbReference type="DrugBank" id="DB01285">
    <property type="generic name" value="Corticotropin"/>
</dbReference>
<dbReference type="DrugBank" id="DB00603">
    <property type="generic name" value="Medroxyprogesterone acetate"/>
</dbReference>
<dbReference type="DrugBank" id="DB00157">
    <property type="generic name" value="NADH"/>
</dbReference>
<dbReference type="DrugBank" id="DB00717">
    <property type="generic name" value="Norethisterone"/>
</dbReference>
<dbReference type="DrugBank" id="DB09070">
    <property type="generic name" value="Tibolone"/>
</dbReference>
<dbReference type="DrugBank" id="DB01108">
    <property type="generic name" value="Trilostane"/>
</dbReference>
<dbReference type="DrugCentral" id="P26439"/>
<dbReference type="SwissLipids" id="SLP:000001296"/>
<dbReference type="GlyGen" id="P26439">
    <property type="glycosylation" value="2 sites, 1 O-linked glycan (1 site)"/>
</dbReference>
<dbReference type="iPTMnet" id="P26439"/>
<dbReference type="PhosphoSitePlus" id="P26439"/>
<dbReference type="BioMuta" id="HSD3B2"/>
<dbReference type="DMDM" id="112770"/>
<dbReference type="jPOST" id="P26439"/>
<dbReference type="MassIVE" id="P26439"/>
<dbReference type="PaxDb" id="9606-ENSP00000445122"/>
<dbReference type="PeptideAtlas" id="P26439"/>
<dbReference type="ProteomicsDB" id="54346">
    <molecule id="P26439-1"/>
</dbReference>
<dbReference type="ProteomicsDB" id="54347">
    <molecule id="P26439-2"/>
</dbReference>
<dbReference type="Antibodypedia" id="33908">
    <property type="antibodies" value="180 antibodies from 26 providers"/>
</dbReference>
<dbReference type="DNASU" id="3284"/>
<dbReference type="Ensembl" id="ENST00000369416.4">
    <molecule id="P26439-1"/>
    <property type="protein sequence ID" value="ENSP00000358424.3"/>
    <property type="gene ID" value="ENSG00000203859.10"/>
</dbReference>
<dbReference type="Ensembl" id="ENST00000543831.5">
    <molecule id="P26439-1"/>
    <property type="protein sequence ID" value="ENSP00000445122.1"/>
    <property type="gene ID" value="ENSG00000203859.10"/>
</dbReference>
<dbReference type="GeneID" id="3284"/>
<dbReference type="KEGG" id="hsa:3284"/>
<dbReference type="MANE-Select" id="ENST00000369416.4">
    <property type="protein sequence ID" value="ENSP00000358424.3"/>
    <property type="RefSeq nucleotide sequence ID" value="NM_000198.4"/>
    <property type="RefSeq protein sequence ID" value="NP_000189.1"/>
</dbReference>
<dbReference type="UCSC" id="uc001eht.4">
    <molecule id="P26439-1"/>
    <property type="organism name" value="human"/>
</dbReference>
<dbReference type="AGR" id="HGNC:5218"/>
<dbReference type="CTD" id="3284"/>
<dbReference type="DisGeNET" id="3284"/>
<dbReference type="GeneCards" id="HSD3B2"/>
<dbReference type="HGNC" id="HGNC:5218">
    <property type="gene designation" value="HSD3B2"/>
</dbReference>
<dbReference type="HPA" id="ENSG00000203859">
    <property type="expression patterns" value="Tissue enriched (adrenal)"/>
</dbReference>
<dbReference type="MalaCards" id="HSD3B2"/>
<dbReference type="MIM" id="201810">
    <property type="type" value="phenotype"/>
</dbReference>
<dbReference type="MIM" id="613890">
    <property type="type" value="gene"/>
</dbReference>
<dbReference type="neXtProt" id="NX_P26439"/>
<dbReference type="OpenTargets" id="ENSG00000203859"/>
<dbReference type="Orphanet" id="90791">
    <property type="disease" value="Congenital adrenal hyperplasia due to 3-beta-hydroxysteroid dehydrogenase deficiency"/>
</dbReference>
<dbReference type="PharmGKB" id="PA29487"/>
<dbReference type="VEuPathDB" id="HostDB:ENSG00000203859"/>
<dbReference type="eggNOG" id="KOG1430">
    <property type="taxonomic scope" value="Eukaryota"/>
</dbReference>
<dbReference type="GeneTree" id="ENSGT00940000161374"/>
<dbReference type="HOGENOM" id="CLU_007383_6_3_1"/>
<dbReference type="InParanoid" id="P26439"/>
<dbReference type="OMA" id="GGKFYFV"/>
<dbReference type="OrthoDB" id="1925334at2759"/>
<dbReference type="PAN-GO" id="P26439">
    <property type="GO annotations" value="7 GO annotations based on evolutionary models"/>
</dbReference>
<dbReference type="PhylomeDB" id="P26439"/>
<dbReference type="TreeFam" id="TF343138"/>
<dbReference type="BioCyc" id="MetaCyc:HS10943-MONOMER"/>
<dbReference type="BRENDA" id="1.1.1.145">
    <property type="organism ID" value="2681"/>
</dbReference>
<dbReference type="BRENDA" id="5.3.3.1">
    <property type="organism ID" value="2681"/>
</dbReference>
<dbReference type="PathwayCommons" id="P26439"/>
<dbReference type="Reactome" id="R-HSA-193048">
    <property type="pathway name" value="Androgen biosynthesis"/>
</dbReference>
<dbReference type="Reactome" id="R-HSA-193993">
    <property type="pathway name" value="Mineralocorticoid biosynthesis"/>
</dbReference>
<dbReference type="Reactome" id="R-HSA-194002">
    <property type="pathway name" value="Glucocorticoid biosynthesis"/>
</dbReference>
<dbReference type="SignaLink" id="P26439"/>
<dbReference type="SIGNOR" id="P26439"/>
<dbReference type="UniPathway" id="UPA00062"/>
<dbReference type="BioGRID-ORCS" id="3284">
    <property type="hits" value="8 hits in 1117 CRISPR screens"/>
</dbReference>
<dbReference type="ChiTaRS" id="HSD3B2">
    <property type="organism name" value="human"/>
</dbReference>
<dbReference type="GeneWiki" id="HSD3B2"/>
<dbReference type="GenomeRNAi" id="3284"/>
<dbReference type="Pharos" id="P26439">
    <property type="development level" value="Tclin"/>
</dbReference>
<dbReference type="PRO" id="PR:P26439"/>
<dbReference type="Proteomes" id="UP000005640">
    <property type="component" value="Chromosome 1"/>
</dbReference>
<dbReference type="RNAct" id="P26439">
    <property type="molecule type" value="protein"/>
</dbReference>
<dbReference type="Bgee" id="ENSG00000203859">
    <property type="expression patterns" value="Expressed in right adrenal gland and 94 other cell types or tissues"/>
</dbReference>
<dbReference type="ExpressionAtlas" id="P26439">
    <property type="expression patterns" value="baseline and differential"/>
</dbReference>
<dbReference type="GO" id="GO:0005929">
    <property type="term" value="C:cilium"/>
    <property type="evidence" value="ECO:0000314"/>
    <property type="project" value="HPA"/>
</dbReference>
<dbReference type="GO" id="GO:0005737">
    <property type="term" value="C:cytoplasm"/>
    <property type="evidence" value="ECO:0000318"/>
    <property type="project" value="GO_Central"/>
</dbReference>
<dbReference type="GO" id="GO:0005783">
    <property type="term" value="C:endoplasmic reticulum"/>
    <property type="evidence" value="ECO:0000314"/>
    <property type="project" value="HPA"/>
</dbReference>
<dbReference type="GO" id="GO:0005789">
    <property type="term" value="C:endoplasmic reticulum membrane"/>
    <property type="evidence" value="ECO:0000304"/>
    <property type="project" value="Reactome"/>
</dbReference>
<dbReference type="GO" id="GO:0045171">
    <property type="term" value="C:intercellular bridge"/>
    <property type="evidence" value="ECO:0000314"/>
    <property type="project" value="HPA"/>
</dbReference>
<dbReference type="GO" id="GO:0043231">
    <property type="term" value="C:intracellular membrane-bounded organelle"/>
    <property type="evidence" value="ECO:0000318"/>
    <property type="project" value="GO_Central"/>
</dbReference>
<dbReference type="GO" id="GO:0016020">
    <property type="term" value="C:membrane"/>
    <property type="evidence" value="ECO:0000303"/>
    <property type="project" value="UniProtKB"/>
</dbReference>
<dbReference type="GO" id="GO:0015630">
    <property type="term" value="C:microtubule cytoskeleton"/>
    <property type="evidence" value="ECO:0000314"/>
    <property type="project" value="HPA"/>
</dbReference>
<dbReference type="GO" id="GO:0005743">
    <property type="term" value="C:mitochondrial inner membrane"/>
    <property type="evidence" value="ECO:0000250"/>
    <property type="project" value="UniProtKB"/>
</dbReference>
<dbReference type="GO" id="GO:0005758">
    <property type="term" value="C:mitochondrial intermembrane space"/>
    <property type="evidence" value="ECO:0000250"/>
    <property type="project" value="UniProtKB"/>
</dbReference>
<dbReference type="GO" id="GO:0031966">
    <property type="term" value="C:mitochondrial membrane"/>
    <property type="evidence" value="ECO:0000303"/>
    <property type="project" value="UniProtKB"/>
</dbReference>
<dbReference type="GO" id="GO:0005730">
    <property type="term" value="C:nucleolus"/>
    <property type="evidence" value="ECO:0000314"/>
    <property type="project" value="HPA"/>
</dbReference>
<dbReference type="GO" id="GO:0030868">
    <property type="term" value="C:smooth endoplasmic reticulum membrane"/>
    <property type="evidence" value="ECO:0000250"/>
    <property type="project" value="UniProtKB"/>
</dbReference>
<dbReference type="GO" id="GO:0003854">
    <property type="term" value="F:3-beta-hydroxy-Delta5-steroid dehydrogenase (NAD+) activity"/>
    <property type="evidence" value="ECO:0000314"/>
    <property type="project" value="UniProtKB"/>
</dbReference>
<dbReference type="GO" id="GO:0016616">
    <property type="term" value="F:oxidoreductase activity, acting on the CH-OH group of donors, NAD or NADP as acceptor"/>
    <property type="evidence" value="ECO:0000318"/>
    <property type="project" value="GO_Central"/>
</dbReference>
<dbReference type="GO" id="GO:0004769">
    <property type="term" value="F:steroid Delta-isomerase activity"/>
    <property type="evidence" value="ECO:0000314"/>
    <property type="project" value="UniProtKB"/>
</dbReference>
<dbReference type="GO" id="GO:0006702">
    <property type="term" value="P:androgen biosynthetic process"/>
    <property type="evidence" value="ECO:0000315"/>
    <property type="project" value="UniProtKB"/>
</dbReference>
<dbReference type="GO" id="GO:0008207">
    <property type="term" value="P:C21-steroid hormone metabolic process"/>
    <property type="evidence" value="ECO:0000318"/>
    <property type="project" value="GO_Central"/>
</dbReference>
<dbReference type="GO" id="GO:0006694">
    <property type="term" value="P:steroid biosynthetic process"/>
    <property type="evidence" value="ECO:0000314"/>
    <property type="project" value="UniProtKB"/>
</dbReference>
<dbReference type="CDD" id="cd09811">
    <property type="entry name" value="3b-HSD_HSDB1_like_SDR_e"/>
    <property type="match status" value="1"/>
</dbReference>
<dbReference type="FunFam" id="3.40.50.720:FF:000220">
    <property type="entry name" value="3 beta-hydroxysteroid dehydrogenase/Delta 5--&gt;4-isomerase type 1"/>
    <property type="match status" value="1"/>
</dbReference>
<dbReference type="Gene3D" id="3.40.50.720">
    <property type="entry name" value="NAD(P)-binding Rossmann-like Domain"/>
    <property type="match status" value="1"/>
</dbReference>
<dbReference type="InterPro" id="IPR002225">
    <property type="entry name" value="3Beta_OHSteriod_DH/Estase"/>
</dbReference>
<dbReference type="InterPro" id="IPR050177">
    <property type="entry name" value="Lipid_A_modif_metabolic_enz"/>
</dbReference>
<dbReference type="InterPro" id="IPR036291">
    <property type="entry name" value="NAD(P)-bd_dom_sf"/>
</dbReference>
<dbReference type="PANTHER" id="PTHR43245">
    <property type="entry name" value="BIFUNCTIONAL POLYMYXIN RESISTANCE PROTEIN ARNA"/>
    <property type="match status" value="1"/>
</dbReference>
<dbReference type="PANTHER" id="PTHR43245:SF51">
    <property type="entry name" value="SHORT CHAIN DEHYDROGENASE_REDUCTASE FAMILY 42E, MEMBER 2"/>
    <property type="match status" value="1"/>
</dbReference>
<dbReference type="Pfam" id="PF01073">
    <property type="entry name" value="3Beta_HSD"/>
    <property type="match status" value="1"/>
</dbReference>
<dbReference type="SUPFAM" id="SSF51735">
    <property type="entry name" value="NAD(P)-binding Rossmann-fold domains"/>
    <property type="match status" value="1"/>
</dbReference>
<name>3BHS2_HUMAN</name>
<comment type="function">
    <text evidence="8">3-beta-HSD is a bifunctional enzyme, that catalyzes the oxidative conversion of Delta(5)-ene-3-beta-hydroxy steroid, and the oxidative conversion of ketosteroids. The 3-beta-HSD enzymatic system plays a crucial role in the biosynthesis of all classes of hormonal steroids.</text>
</comment>
<comment type="catalytic activity">
    <reaction evidence="26">
        <text>a 3beta-hydroxy-Delta(5)-steroid + NAD(+) = a 3-oxo-Delta(5)-steroid + NADH + H(+)</text>
        <dbReference type="Rhea" id="RHEA:24076"/>
        <dbReference type="ChEBI" id="CHEBI:1722"/>
        <dbReference type="ChEBI" id="CHEBI:15378"/>
        <dbReference type="ChEBI" id="CHEBI:47907"/>
        <dbReference type="ChEBI" id="CHEBI:57540"/>
        <dbReference type="ChEBI" id="CHEBI:57945"/>
        <dbReference type="EC" id="1.1.1.145"/>
    </reaction>
</comment>
<comment type="catalytic activity">
    <reaction evidence="26">
        <text>a 3-oxo-Delta(5)-steroid = a 3-oxo-Delta(4)-steroid</text>
        <dbReference type="Rhea" id="RHEA:14709"/>
        <dbReference type="ChEBI" id="CHEBI:47907"/>
        <dbReference type="ChEBI" id="CHEBI:47909"/>
        <dbReference type="EC" id="5.3.3.1"/>
    </reaction>
</comment>
<comment type="catalytic activity">
    <reaction evidence="12">
        <text>pregnenolone + NAD(+) = pregn-5-ene-3,20-dione + NADH + H(+)</text>
        <dbReference type="Rhea" id="RHEA:43924"/>
        <dbReference type="ChEBI" id="CHEBI:15378"/>
        <dbReference type="ChEBI" id="CHEBI:16581"/>
        <dbReference type="ChEBI" id="CHEBI:57540"/>
        <dbReference type="ChEBI" id="CHEBI:57945"/>
        <dbReference type="ChEBI" id="CHEBI:63837"/>
    </reaction>
    <physiologicalReaction direction="left-to-right" evidence="26">
        <dbReference type="Rhea" id="RHEA:43925"/>
    </physiologicalReaction>
</comment>
<comment type="catalytic activity">
    <reaction evidence="12">
        <text>pregn-5-ene-3,20-dione = progesterone</text>
        <dbReference type="Rhea" id="RHEA:43928"/>
        <dbReference type="ChEBI" id="CHEBI:17026"/>
        <dbReference type="ChEBI" id="CHEBI:63837"/>
    </reaction>
    <physiologicalReaction direction="left-to-right" evidence="26">
        <dbReference type="Rhea" id="RHEA:43929"/>
    </physiologicalReaction>
</comment>
<comment type="catalytic activity">
    <reaction evidence="12">
        <text>3beta-hydroxyandrost-5-en-17-one + NAD(+) = androst-5-ene-3,17-dione + NADH + H(+)</text>
        <dbReference type="Rhea" id="RHEA:43932"/>
        <dbReference type="ChEBI" id="CHEBI:15378"/>
        <dbReference type="ChEBI" id="CHEBI:28689"/>
        <dbReference type="ChEBI" id="CHEBI:57540"/>
        <dbReference type="ChEBI" id="CHEBI:57945"/>
        <dbReference type="ChEBI" id="CHEBI:83865"/>
        <dbReference type="EC" id="1.1.1.145"/>
    </reaction>
    <physiologicalReaction direction="left-to-right" evidence="26">
        <dbReference type="Rhea" id="RHEA:43933"/>
    </physiologicalReaction>
</comment>
<comment type="catalytic activity">
    <reaction evidence="12">
        <text>androst-5-ene-3,17-dione = androst-4-ene-3,17-dione</text>
        <dbReference type="Rhea" id="RHEA:43936"/>
        <dbReference type="ChEBI" id="CHEBI:16422"/>
        <dbReference type="ChEBI" id="CHEBI:83865"/>
    </reaction>
    <physiologicalReaction direction="left-to-right" evidence="26">
        <dbReference type="Rhea" id="RHEA:43937"/>
    </physiologicalReaction>
</comment>
<comment type="biophysicochemical properties">
    <kinetics>
        <KM evidence="12">1.84 uM for pregnenolone</KM>
        <Vmax evidence="12">0.16 pmol/min/mg enzyme toward pregnenolone</Vmax>
    </kinetics>
</comment>
<comment type="pathway">
    <text evidence="12">Lipid metabolism; steroid biosynthesis.</text>
</comment>
<comment type="interaction">
    <interactant intactId="EBI-21761225">
        <id>P26439</id>
    </interactant>
    <interactant intactId="EBI-1955541">
        <id>Q53GS7</id>
        <label>GLE1</label>
    </interactant>
    <organismsDiffer>false</organismsDiffer>
    <experiments>3</experiments>
</comment>
<comment type="interaction">
    <interactant intactId="EBI-21761225">
        <id>P26439</id>
    </interactant>
    <interactant intactId="EBI-5235340">
        <id>Q7Z699</id>
        <label>SPRED1</label>
    </interactant>
    <organismsDiffer>false</organismsDiffer>
    <experiments>3</experiments>
</comment>
<comment type="subcellular location">
    <subcellularLocation>
        <location evidence="12">Endoplasmic reticulum membrane</location>
        <topology evidence="2">Single-pass membrane protein</topology>
    </subcellularLocation>
    <subcellularLocation>
        <location>Mitochondrion membrane</location>
        <topology evidence="2">Single-pass membrane protein</topology>
    </subcellularLocation>
</comment>
<comment type="alternative products">
    <event type="alternative splicing"/>
    <isoform>
        <id>P26439-1</id>
        <name>1</name>
        <sequence type="displayed"/>
    </isoform>
    <isoform>
        <id>P26439-2</id>
        <name>2</name>
        <sequence type="described" ref="VSP_037399 VSP_037400"/>
    </isoform>
</comment>
<comment type="tissue specificity">
    <text>Expressed in adrenal gland, testis and ovary.</text>
</comment>
<comment type="disease" evidence="3 4 5 6 10 11 12 13 14 15 16 17 18 19 20 21 22 23">
    <disease id="DI-00042">
        <name>Adrenal hyperplasia 2</name>
        <acronym>AH2</acronym>
        <description>A form of congenital adrenal hyperplasia, a common recessive disease due to defective synthesis of cortisol. Congenital adrenal hyperplasia is characterized by androgen excess leading to ambiguous genitalia in affected females, rapid somatic growth during childhood in both sexes with premature closure of the epiphyses and short adult stature. Four clinical types: 'salt wasting' (SW, the most severe type), 'simple virilizing' (SV, less severely affected patients), with normal aldosterone biosynthesis, 'non-classic form' or late-onset (NC or LOAH) and 'cryptic' (asymptomatic). In AH2, virilization is much less marked or does not occur. AH2 is frequently lethal in early life.</description>
        <dbReference type="MIM" id="201810"/>
    </disease>
    <text>The disease is caused by variants affecting the gene represented in this entry.</text>
</comment>
<comment type="disease">
    <text evidence="7">Mild HSD3B2 deficiency in hyperandrogenic females is associated with characteristic traits of polycystic ovary syndrome, such as insulin resistance and luteinizing hormone hypersecretion.</text>
</comment>
<comment type="similarity">
    <text evidence="25">Belongs to the 3-beta-HSD family.</text>
</comment>
<comment type="sequence caution" evidence="25">
    <conflict type="frameshift">
        <sequence resource="EMBL-CDS" id="AAC60600"/>
    </conflict>
    <text>The frameshift is caused by a single nucleotide insertion which is found in AH2.</text>
</comment>
<feature type="chain" id="PRO_0000087775" description="3 beta-hydroxysteroid dehydrogenase/Delta 5--&gt;4-isomerase type 2">
    <location>
        <begin position="1"/>
        <end position="372"/>
    </location>
</feature>
<feature type="transmembrane region" description="Helical" evidence="2">
    <location>
        <begin position="287"/>
        <end position="307"/>
    </location>
</feature>
<feature type="active site" description="Proton acceptor" evidence="1">
    <location>
        <position position="154"/>
    </location>
</feature>
<feature type="binding site" evidence="1">
    <location>
        <position position="158"/>
    </location>
    <ligand>
        <name>NAD(+)</name>
        <dbReference type="ChEBI" id="CHEBI:57540"/>
    </ligand>
</feature>
<feature type="splice variant" id="VSP_037399" description="In isoform 2." evidence="24">
    <original>GTQLLLEACVQASVPVFIYTSSIEVAGPNSYKEIIQNGHEEEPLENTWPTPYPYSKKLAEKAVLAANGWNLKNGDTLYTCALRPTYIYGEGGPFLSASINEALNNNGILSSVGKFSTVNP</original>
    <variation>ELQNKIKLTVLEGDILDEPFLKRACQDVSVVIHTACIIDVFGVTHRQSIMNVNVKGRVAWGGDKARWGNEDQKEGQEGKRSLSIEHLLCSGPSDFADHYQLGELKAAIFSFIDEKTRTEQ</variation>
    <location>
        <begin position="103"/>
        <end position="222"/>
    </location>
</feature>
<feature type="splice variant" id="VSP_037400" description="In isoform 2." evidence="24">
    <location>
        <begin position="223"/>
        <end position="372"/>
    </location>
</feature>
<feature type="sequence variant" id="VAR_010517" description="In AH2; activity abolished; dbSNP:rs28934880." evidence="3 5">
    <original>A</original>
    <variation>E</variation>
    <location>
        <position position="10"/>
    </location>
</feature>
<feature type="sequence variant" id="VAR_010518" description="In AH2; nonsalt-wasting form; dbSNP:rs28934880." evidence="3">
    <original>A</original>
    <variation>V</variation>
    <location>
        <position position="10"/>
    </location>
</feature>
<feature type="sequence variant" id="VAR_010519" description="In AH2; activity abolished." evidence="3 17">
    <original>G</original>
    <variation>D</variation>
    <location>
        <position position="15"/>
    </location>
</feature>
<feature type="sequence variant" id="VAR_048099" description="In dbSNP:rs4986954.">
    <original>D</original>
    <variation>N</variation>
    <location>
        <position position="74"/>
    </location>
</feature>
<feature type="sequence variant" id="VAR_070028" description="In AH2." evidence="11">
    <original>A</original>
    <variation>P</variation>
    <location>
        <position position="82"/>
    </location>
</feature>
<feature type="sequence variant" id="VAR_010520" description="In AH2; dbSNP:rs757033996." evidence="3 21">
    <original>A</original>
    <variation>T</variation>
    <location>
        <position position="82"/>
    </location>
</feature>
<feature type="sequence variant" id="VAR_014818" description="In dbSNP:rs6211." evidence="9">
    <original>E</original>
    <variation>Q</variation>
    <location>
        <position position="94"/>
    </location>
</feature>
<feature type="sequence variant" id="VAR_010521" description="In AH2; nonsalt-wasting form; dbSNP:rs1388517943." evidence="3 13">
    <original>N</original>
    <variation>S</variation>
    <location>
        <position position="100"/>
    </location>
</feature>
<feature type="sequence variant" id="VAR_010522" description="In AH2; activity abolished." evidence="3 16">
    <original>L</original>
    <variation>W</variation>
    <location>
        <position position="108"/>
    </location>
</feature>
<feature type="sequence variant" id="VAR_010523" description="In AH2; nonsalt-wasting form; dbSNP:rs587628683." evidence="3 4 18">
    <original>G</original>
    <variation>R</variation>
    <location>
        <position position="129"/>
    </location>
</feature>
<feature type="sequence variant" id="VAR_000006" description="In AH2; activity abolished; dbSNP:rs80358219." evidence="3 6 22">
    <original>E</original>
    <variation>K</variation>
    <location>
        <position position="142"/>
    </location>
</feature>
<feature type="sequence variant" id="VAR_010524" description="In AH2; nonsalt-wasting form; dbSNP:rs779418168." evidence="3">
    <original>P</original>
    <variation>L</variation>
    <location>
        <position position="155"/>
    </location>
</feature>
<feature type="sequence variant" id="VAR_010525" description="In AH2; late onset; almost normal activity; dbSNP:rs35486059." evidence="3">
    <original>A</original>
    <variation>V</variation>
    <location>
        <position position="167"/>
    </location>
</feature>
<feature type="sequence variant" id="VAR_010526" description="In AH2; nonsalt-wasting form; dbSNP:rs762479018." evidence="3 19">
    <original>L</original>
    <variation>R</variation>
    <location>
        <position position="173"/>
    </location>
</feature>
<feature type="sequence variant" id="VAR_010527" description="In AH2; activity abolished." evidence="3 16">
    <original>P</original>
    <variation>L</variation>
    <location>
        <position position="186"/>
    </location>
</feature>
<feature type="sequence variant" id="VAR_000007" description="In AH2." evidence="3 14">
    <original>L</original>
    <variation>P</variation>
    <location>
        <position position="205"/>
    </location>
</feature>
<feature type="sequence variant" id="VAR_010528" description="In AH2; late onset; partial loss of activity; dbSNP:rs759422374." evidence="3">
    <original>S</original>
    <variation>G</variation>
    <location>
        <position position="213"/>
    </location>
</feature>
<feature type="sequence variant" id="VAR_010529" description="In AH2; late onset; partial loss of activity." evidence="3">
    <original>K</original>
    <variation>E</variation>
    <location>
        <position position="216"/>
    </location>
</feature>
<feature type="sequence variant" id="VAR_010530" description="In AH2; nonsalt-wasting form; activity abolished." evidence="3">
    <original>P</original>
    <variation>H</variation>
    <location>
        <position position="222"/>
    </location>
</feature>
<feature type="sequence variant" id="VAR_010531" description="In AH2; activity abolished; dbSNP:rs765547422." evidence="3 4">
    <original>P</original>
    <variation>Q</variation>
    <location>
        <position position="222"/>
    </location>
</feature>
<feature type="sequence variant" id="VAR_015411" description="In AH2; dbSNP:rs80358220." evidence="6">
    <original>P</original>
    <variation>T</variation>
    <location>
        <position position="222"/>
    </location>
</feature>
<feature type="sequence variant" id="VAR_010532" description="In AH2; activity abolished.">
    <location>
        <begin position="231"/>
        <end position="238"/>
    </location>
</feature>
<feature type="sequence variant" id="VAR_010533" description="In AH2; mild; 100% of activity; dbSNP:rs35887327." evidence="3 23">
    <original>L</original>
    <variation>S</variation>
    <location>
        <position position="236"/>
    </location>
</feature>
<feature type="sequence variant" id="VAR_000008" description="In AH2; loss of 88% of activity." evidence="3 22">
    <original>A</original>
    <variation>P</variation>
    <location>
        <position position="245"/>
    </location>
</feature>
<feature type="sequence variant" id="VAR_083841" description="In AH2; nonsalt-wasting form; loss of 75% of enzymatic activity for the conversion of pregnenolone to progesterone and dehydroepiandrosterone to androstenedione; no effect on endoplasmic reticulum location." evidence="12">
    <original>G</original>
    <variation>V</variation>
    <location>
        <position position="250"/>
    </location>
</feature>
<feature type="sequence variant" id="VAR_000009" description="In AH2; activity abolished; dbSNP:rs1399005702." evidence="3 22">
    <original>Y</original>
    <variation>N</variation>
    <location>
        <position position="253"/>
    </location>
</feature>
<feature type="sequence variant" id="VAR_000010" description="In AH2; activity abolished; dbSNP:rs1411029929." evidence="3 20">
    <original>Y</original>
    <variation>D</variation>
    <location>
        <position position="254"/>
    </location>
</feature>
<feature type="sequence variant" id="VAR_010534" description="In AH2; activity abolished; dbSNP:rs80358221." evidence="3 4">
    <original>T</original>
    <variation>M</variation>
    <location>
        <position position="259"/>
    </location>
</feature>
<feature type="sequence variant" id="VAR_000011" description="In AH2; activity abolished." evidence="3 15">
    <original>T</original>
    <variation>R</variation>
    <location>
        <position position="259"/>
    </location>
</feature>
<feature type="sequence variant" id="VAR_010535" description="In AH2; nonsalt-wasting form; activity abolished." evidence="3">
    <original>G</original>
    <variation>V</variation>
    <location>
        <position position="294"/>
    </location>
</feature>
<feature type="sequence variant" id="VAR_065665" description="In AH2; strongly reduced activity; dbSNP:rs121964897." evidence="10">
    <original>P</original>
    <variation>L</variation>
    <location>
        <position position="341"/>
    </location>
</feature>
<feature type="sequence conflict" description="In Ref. 8; AAD14329." evidence="25" ref="8">
    <original>RT</original>
    <variation>KI</variation>
    <location>
        <begin position="52"/>
        <end position="53"/>
    </location>
</feature>
<feature type="sequence conflict" description="In Ref. 8; AAD14329." evidence="25" ref="8">
    <original>HRE</original>
    <variation>RRQ</variation>
    <location>
        <begin position="92"/>
        <end position="94"/>
    </location>
</feature>
<feature type="sequence conflict" description="In Ref. 4; BAD96717." evidence="25" ref="4">
    <original>H</original>
    <variation>L</variation>
    <location>
        <position position="232"/>
    </location>
</feature>
<organism>
    <name type="scientific">Homo sapiens</name>
    <name type="common">Human</name>
    <dbReference type="NCBI Taxonomy" id="9606"/>
    <lineage>
        <taxon>Eukaryota</taxon>
        <taxon>Metazoa</taxon>
        <taxon>Chordata</taxon>
        <taxon>Craniata</taxon>
        <taxon>Vertebrata</taxon>
        <taxon>Euteleostomi</taxon>
        <taxon>Mammalia</taxon>
        <taxon>Eutheria</taxon>
        <taxon>Euarchontoglires</taxon>
        <taxon>Primates</taxon>
        <taxon>Haplorrhini</taxon>
        <taxon>Catarrhini</taxon>
        <taxon>Hominidae</taxon>
        <taxon>Homo</taxon>
    </lineage>
</organism>
<gene>
    <name evidence="27" type="primary">HSD3B2</name>
    <name type="synonym">HSDB3B</name>
</gene>
<evidence type="ECO:0000250" key="1"/>
<evidence type="ECO:0000255" key="2"/>
<evidence type="ECO:0000269" key="3">
    <source>
    </source>
</evidence>
<evidence type="ECO:0000269" key="4">
    <source>
    </source>
</evidence>
<evidence type="ECO:0000269" key="5">
    <source>
    </source>
</evidence>
<evidence type="ECO:0000269" key="6">
    <source>
    </source>
</evidence>
<evidence type="ECO:0000269" key="7">
    <source>
    </source>
</evidence>
<evidence type="ECO:0000269" key="8">
    <source>
    </source>
</evidence>
<evidence type="ECO:0000269" key="9">
    <source>
    </source>
</evidence>
<evidence type="ECO:0000269" key="10">
    <source>
    </source>
</evidence>
<evidence type="ECO:0000269" key="11">
    <source>
    </source>
</evidence>
<evidence type="ECO:0000269" key="12">
    <source>
    </source>
</evidence>
<evidence type="ECO:0000269" key="13">
    <source>
    </source>
</evidence>
<evidence type="ECO:0000269" key="14">
    <source>
    </source>
</evidence>
<evidence type="ECO:0000269" key="15">
    <source>
    </source>
</evidence>
<evidence type="ECO:0000269" key="16">
    <source>
    </source>
</evidence>
<evidence type="ECO:0000269" key="17">
    <source>
    </source>
</evidence>
<evidence type="ECO:0000269" key="18">
    <source>
    </source>
</evidence>
<evidence type="ECO:0000269" key="19">
    <source>
    </source>
</evidence>
<evidence type="ECO:0000269" key="20">
    <source>
    </source>
</evidence>
<evidence type="ECO:0000269" key="21">
    <source>
    </source>
</evidence>
<evidence type="ECO:0000269" key="22">
    <source>
    </source>
</evidence>
<evidence type="ECO:0000269" key="23">
    <source>
    </source>
</evidence>
<evidence type="ECO:0000303" key="24">
    <source>
    </source>
</evidence>
<evidence type="ECO:0000305" key="25"/>
<evidence type="ECO:0000305" key="26">
    <source>
    </source>
</evidence>
<evidence type="ECO:0000312" key="27">
    <source>
        <dbReference type="HGNC" id="HGNC:5218"/>
    </source>
</evidence>
<reference key="1">
    <citation type="journal article" date="1991" name="DNA Cell Biol.">
        <title>Structure of the human type II 3 beta-hydroxysteroid dehydrogenase/delta 5-delta 4 isomerase (3 beta-HSD) gene: adrenal and gonadal specificity.</title>
        <authorList>
            <person name="Lachance Y."/>
            <person name="Luu-The V."/>
            <person name="Verreault H."/>
            <person name="Dumont M."/>
            <person name="Rheaume E."/>
            <person name="Leblanc G."/>
            <person name="Labrie F."/>
        </authorList>
    </citation>
    <scope>NUCLEOTIDE SEQUENCE [GENOMIC DNA]</scope>
</reference>
<reference key="2">
    <citation type="journal article" date="1991" name="Mol. Endocrinol.">
        <title>Structure and expression of a new complementary DNA encoding the almost exclusive 3 beta-hydroxysteroid dehydrogenase/delta 5-delta 4-isomerase in human adrenals and gonads.</title>
        <authorList>
            <person name="Rheaume E."/>
            <person name="Lachance Y."/>
            <person name="Zhao H.-F."/>
            <person name="Breton N."/>
            <person name="Dumont M."/>
            <person name="de Launoit Y."/>
            <person name="Trudel C."/>
            <person name="Luu-The V."/>
            <person name="Simard J."/>
            <person name="Labrie F."/>
        </authorList>
    </citation>
    <scope>NUCLEOTIDE SEQUENCE [MRNA]</scope>
    <source>
        <tissue>Adrenal gland</tissue>
    </source>
</reference>
<reference key="3">
    <citation type="journal article" date="2007" name="BMC Genomics">
        <title>The full-ORF clone resource of the German cDNA consortium.</title>
        <authorList>
            <person name="Bechtel S."/>
            <person name="Rosenfelder H."/>
            <person name="Duda A."/>
            <person name="Schmidt C.P."/>
            <person name="Ernst U."/>
            <person name="Wellenreuther R."/>
            <person name="Mehrle A."/>
            <person name="Schuster C."/>
            <person name="Bahr A."/>
            <person name="Bloecker H."/>
            <person name="Heubner D."/>
            <person name="Hoerlein A."/>
            <person name="Michel G."/>
            <person name="Wedler H."/>
            <person name="Koehrer K."/>
            <person name="Ottenwaelder B."/>
            <person name="Poustka A."/>
            <person name="Wiemann S."/>
            <person name="Schupp I."/>
        </authorList>
    </citation>
    <scope>NUCLEOTIDE SEQUENCE [LARGE SCALE MRNA] (ISOFORM 2)</scope>
    <scope>VARIANT GLN-94</scope>
    <source>
        <tissue>Adrenal gland</tissue>
    </source>
</reference>
<reference key="4">
    <citation type="submission" date="2005-04" db="EMBL/GenBank/DDBJ databases">
        <authorList>
            <person name="Suzuki Y."/>
            <person name="Sugano S."/>
            <person name="Totoki Y."/>
            <person name="Toyoda A."/>
            <person name="Takeda T."/>
            <person name="Sakaki Y."/>
            <person name="Tanaka A."/>
            <person name="Yokoyama S."/>
        </authorList>
    </citation>
    <scope>NUCLEOTIDE SEQUENCE [LARGE SCALE MRNA]</scope>
    <source>
        <tissue>Small intestine</tissue>
    </source>
</reference>
<reference key="5">
    <citation type="journal article" date="2006" name="Nature">
        <title>The DNA sequence and biological annotation of human chromosome 1.</title>
        <authorList>
            <person name="Gregory S.G."/>
            <person name="Barlow K.F."/>
            <person name="McLay K.E."/>
            <person name="Kaul R."/>
            <person name="Swarbreck D."/>
            <person name="Dunham A."/>
            <person name="Scott C.E."/>
            <person name="Howe K.L."/>
            <person name="Woodfine K."/>
            <person name="Spencer C.C.A."/>
            <person name="Jones M.C."/>
            <person name="Gillson C."/>
            <person name="Searle S."/>
            <person name="Zhou Y."/>
            <person name="Kokocinski F."/>
            <person name="McDonald L."/>
            <person name="Evans R."/>
            <person name="Phillips K."/>
            <person name="Atkinson A."/>
            <person name="Cooper R."/>
            <person name="Jones C."/>
            <person name="Hall R.E."/>
            <person name="Andrews T.D."/>
            <person name="Lloyd C."/>
            <person name="Ainscough R."/>
            <person name="Almeida J.P."/>
            <person name="Ambrose K.D."/>
            <person name="Anderson F."/>
            <person name="Andrew R.W."/>
            <person name="Ashwell R.I.S."/>
            <person name="Aubin K."/>
            <person name="Babbage A.K."/>
            <person name="Bagguley C.L."/>
            <person name="Bailey J."/>
            <person name="Beasley H."/>
            <person name="Bethel G."/>
            <person name="Bird C.P."/>
            <person name="Bray-Allen S."/>
            <person name="Brown J.Y."/>
            <person name="Brown A.J."/>
            <person name="Buckley D."/>
            <person name="Burton J."/>
            <person name="Bye J."/>
            <person name="Carder C."/>
            <person name="Chapman J.C."/>
            <person name="Clark S.Y."/>
            <person name="Clarke G."/>
            <person name="Clee C."/>
            <person name="Cobley V."/>
            <person name="Collier R.E."/>
            <person name="Corby N."/>
            <person name="Coville G.J."/>
            <person name="Davies J."/>
            <person name="Deadman R."/>
            <person name="Dunn M."/>
            <person name="Earthrowl M."/>
            <person name="Ellington A.G."/>
            <person name="Errington H."/>
            <person name="Frankish A."/>
            <person name="Frankland J."/>
            <person name="French L."/>
            <person name="Garner P."/>
            <person name="Garnett J."/>
            <person name="Gay L."/>
            <person name="Ghori M.R.J."/>
            <person name="Gibson R."/>
            <person name="Gilby L.M."/>
            <person name="Gillett W."/>
            <person name="Glithero R.J."/>
            <person name="Grafham D.V."/>
            <person name="Griffiths C."/>
            <person name="Griffiths-Jones S."/>
            <person name="Grocock R."/>
            <person name="Hammond S."/>
            <person name="Harrison E.S.I."/>
            <person name="Hart E."/>
            <person name="Haugen E."/>
            <person name="Heath P.D."/>
            <person name="Holmes S."/>
            <person name="Holt K."/>
            <person name="Howden P.J."/>
            <person name="Hunt A.R."/>
            <person name="Hunt S.E."/>
            <person name="Hunter G."/>
            <person name="Isherwood J."/>
            <person name="James R."/>
            <person name="Johnson C."/>
            <person name="Johnson D."/>
            <person name="Joy A."/>
            <person name="Kay M."/>
            <person name="Kershaw J.K."/>
            <person name="Kibukawa M."/>
            <person name="Kimberley A.M."/>
            <person name="King A."/>
            <person name="Knights A.J."/>
            <person name="Lad H."/>
            <person name="Laird G."/>
            <person name="Lawlor S."/>
            <person name="Leongamornlert D.A."/>
            <person name="Lloyd D.M."/>
            <person name="Loveland J."/>
            <person name="Lovell J."/>
            <person name="Lush M.J."/>
            <person name="Lyne R."/>
            <person name="Martin S."/>
            <person name="Mashreghi-Mohammadi M."/>
            <person name="Matthews L."/>
            <person name="Matthews N.S.W."/>
            <person name="McLaren S."/>
            <person name="Milne S."/>
            <person name="Mistry S."/>
            <person name="Moore M.J.F."/>
            <person name="Nickerson T."/>
            <person name="O'Dell C.N."/>
            <person name="Oliver K."/>
            <person name="Palmeiri A."/>
            <person name="Palmer S.A."/>
            <person name="Parker A."/>
            <person name="Patel D."/>
            <person name="Pearce A.V."/>
            <person name="Peck A.I."/>
            <person name="Pelan S."/>
            <person name="Phelps K."/>
            <person name="Phillimore B.J."/>
            <person name="Plumb R."/>
            <person name="Rajan J."/>
            <person name="Raymond C."/>
            <person name="Rouse G."/>
            <person name="Saenphimmachak C."/>
            <person name="Sehra H.K."/>
            <person name="Sheridan E."/>
            <person name="Shownkeen R."/>
            <person name="Sims S."/>
            <person name="Skuce C.D."/>
            <person name="Smith M."/>
            <person name="Steward C."/>
            <person name="Subramanian S."/>
            <person name="Sycamore N."/>
            <person name="Tracey A."/>
            <person name="Tromans A."/>
            <person name="Van Helmond Z."/>
            <person name="Wall M."/>
            <person name="Wallis J.M."/>
            <person name="White S."/>
            <person name="Whitehead S.L."/>
            <person name="Wilkinson J.E."/>
            <person name="Willey D.L."/>
            <person name="Williams H."/>
            <person name="Wilming L."/>
            <person name="Wray P.W."/>
            <person name="Wu Z."/>
            <person name="Coulson A."/>
            <person name="Vaudin M."/>
            <person name="Sulston J.E."/>
            <person name="Durbin R.M."/>
            <person name="Hubbard T."/>
            <person name="Wooster R."/>
            <person name="Dunham I."/>
            <person name="Carter N.P."/>
            <person name="McVean G."/>
            <person name="Ross M.T."/>
            <person name="Harrow J."/>
            <person name="Olson M.V."/>
            <person name="Beck S."/>
            <person name="Rogers J."/>
            <person name="Bentley D.R."/>
        </authorList>
    </citation>
    <scope>NUCLEOTIDE SEQUENCE [LARGE SCALE GENOMIC DNA]</scope>
</reference>
<reference key="6">
    <citation type="submission" date="2005-07" db="EMBL/GenBank/DDBJ databases">
        <authorList>
            <person name="Mural R.J."/>
            <person name="Istrail S."/>
            <person name="Sutton G.G."/>
            <person name="Florea L."/>
            <person name="Halpern A.L."/>
            <person name="Mobarry C.M."/>
            <person name="Lippert R."/>
            <person name="Walenz B."/>
            <person name="Shatkay H."/>
            <person name="Dew I."/>
            <person name="Miller J.R."/>
            <person name="Flanigan M.J."/>
            <person name="Edwards N.J."/>
            <person name="Bolanos R."/>
            <person name="Fasulo D."/>
            <person name="Halldorsson B.V."/>
            <person name="Hannenhalli S."/>
            <person name="Turner R."/>
            <person name="Yooseph S."/>
            <person name="Lu F."/>
            <person name="Nusskern D.R."/>
            <person name="Shue B.C."/>
            <person name="Zheng X.H."/>
            <person name="Zhong F."/>
            <person name="Delcher A.L."/>
            <person name="Huson D.H."/>
            <person name="Kravitz S.A."/>
            <person name="Mouchard L."/>
            <person name="Reinert K."/>
            <person name="Remington K.A."/>
            <person name="Clark A.G."/>
            <person name="Waterman M.S."/>
            <person name="Eichler E.E."/>
            <person name="Adams M.D."/>
            <person name="Hunkapiller M.W."/>
            <person name="Myers E.W."/>
            <person name="Venter J.C."/>
        </authorList>
    </citation>
    <scope>NUCLEOTIDE SEQUENCE [LARGE SCALE GENOMIC DNA]</scope>
</reference>
<reference key="7">
    <citation type="journal article" date="2004" name="Genome Res.">
        <title>The status, quality, and expansion of the NIH full-length cDNA project: the Mammalian Gene Collection (MGC).</title>
        <authorList>
            <consortium name="The MGC Project Team"/>
        </authorList>
    </citation>
    <scope>NUCLEOTIDE SEQUENCE [LARGE SCALE MRNA] (ISOFORM 1)</scope>
    <source>
        <tissue>Brain</tissue>
    </source>
</reference>
<reference key="8">
    <citation type="journal article" date="1995" name="Endocr. Res.">
        <title>Variation in the expression of human 3 beta-hydroxysteroid dehydrogenase.</title>
        <authorList>
            <person name="Russell A.J."/>
            <person name="McCartin S."/>
            <person name="Corcao G."/>
            <person name="Burridge S.M."/>
            <person name="McBride M.W."/>
            <person name="McNicol A.M."/>
            <person name="Hawes C.S."/>
            <person name="Mason J.I."/>
            <person name="Sutcliffe R.G."/>
        </authorList>
    </citation>
    <scope>NUCLEOTIDE SEQUENCE [GENOMIC DNA] OF 49-102</scope>
</reference>
<reference key="9">
    <citation type="journal article" date="1992" name="Nat. Genet.">
        <title>Congenital adrenal hyperplasia due to point mutations in the type II 3 beta-hydroxysteroid dehydrogenase gene.</title>
        <authorList>
            <person name="Rheaume E."/>
            <person name="Simard J."/>
            <person name="Morel Y."/>
            <person name="Mebarki F."/>
            <person name="Zachmann M."/>
            <person name="Forest M.G."/>
            <person name="New M.I."/>
            <person name="Labrie F."/>
        </authorList>
    </citation>
    <scope>NUCLEOTIDE SEQUENCE [GENOMIC DNA] OF 167-205</scope>
</reference>
<reference key="10">
    <citation type="journal article" date="2004" name="J. Clin. Endocrinol. Metab.">
        <title>The hormonal phenotype of nonclassic 3 beta-hydroxysteroid dehydrogenase (HSD3B) deficiency in hyperandrogenic females is associated with insulin-resistant polycystic ovary syndrome and is not a variant of inherited HSD3B2 deficiency.</title>
        <authorList>
            <person name="Carbunaru G."/>
            <person name="Prasad P."/>
            <person name="Scoccia B."/>
            <person name="Shea P."/>
            <person name="Hopwood N."/>
            <person name="Ziai F."/>
            <person name="Chang Y.T."/>
            <person name="Myers S.E."/>
            <person name="Mason J.I."/>
            <person name="Pang S."/>
        </authorList>
    </citation>
    <scope>POSSIBLE INVOLVEMENT IN INSULIN-RESISTANT POLYCYSTIC OVARY SYNDROME</scope>
</reference>
<reference key="11">
    <citation type="journal article" date="1993" name="Mol. Endocrinol.">
        <title>Molecular basis of congenital adrenal hyperplasia due to 3 beta-hydroxysteroid dehydrogenase deficiency.</title>
        <authorList>
            <person name="Simard J."/>
            <person name="Rheaume E."/>
            <person name="Sanchez R."/>
            <person name="Laflamme N."/>
            <person name="de Launoit Y."/>
            <person name="Luu-The V."/>
            <person name="van Seters A.P."/>
            <person name="Gordon R.D."/>
            <person name="Bettendorf M."/>
            <person name="Heinrich U."/>
            <person name="Moshang T."/>
            <person name="New M.I."/>
            <person name="Labrie F."/>
        </authorList>
    </citation>
    <scope>VARIANTS AH2 LYS-142; PRO-245 AND ASN-253</scope>
</reference>
<reference key="12">
    <citation type="journal article" date="1994" name="Hum. Mol. Genet.">
        <title>Functional characterization of the novel L108W and P186L mutations detected in the type II 3 beta-hydroxysteroid dehydrogenase gene of a male pseudohermaphrodite with congenital adrenal hyperplasia.</title>
        <authorList>
            <person name="Sanchez R."/>
            <person name="Mebarki F."/>
            <person name="Rheaume E."/>
            <person name="Laflamme N."/>
            <person name="Forest M.G."/>
            <person name="Bey-Omar F."/>
            <person name="David M."/>
            <person name="Morel Y."/>
            <person name="Labrie F."/>
            <person name="Simard J."/>
        </authorList>
    </citation>
    <scope>VARIANTS AH2 TRP-108 AND LEU-186</scope>
</reference>
<reference key="13">
    <citation type="journal article" date="1994" name="J. Clin. Endocrinol. Metab.">
        <title>Detection and functional characterization of the novel missense mutation Y254D in type II 3 beta-hydroxysteroid dehydrogenase (3 beta HSD) gene of a female patient with nonsalt-losing 3 beta HSD deficiency.</title>
        <authorList>
            <person name="Sanchez R."/>
            <person name="Rheaume E."/>
            <person name="Laflamme N."/>
            <person name="Rosenfield R.L."/>
            <person name="Labrie F."/>
            <person name="Simard J."/>
        </authorList>
    </citation>
    <scope>VARIANT AH2 ASP-254</scope>
</reference>
<reference key="14">
    <citation type="journal article" date="1994" name="J. Clin. Endocrinol. Metab.">
        <title>Molecular basis of congenital adrenal hyperplasia in two siblings with classical nonsalt-losing 3 beta-hydroxysteroid dehydrogenase deficiency.</title>
        <authorList>
            <person name="Rheaume E."/>
            <person name="Sanchez R."/>
            <person name="Simard J."/>
            <person name="Chang Y.T."/>
            <person name="Wang J."/>
            <person name="Pang S."/>
            <person name="Labrie F."/>
        </authorList>
    </citation>
    <scope>VARIANT AH2 ARG-129</scope>
</reference>
<reference key="15">
    <citation type="journal article" date="1994" name="J. Mol. Endocrinol.">
        <title>Mutation in 3 beta-hydroxysteroid dehydrogenase type II associated with pseudohermaphroditism in males and premature pubarche or cryptic expression in females.</title>
        <authorList>
            <person name="Mendonca B.B."/>
            <person name="Russell A.J."/>
            <person name="Vasconcelos-Leite M."/>
            <person name="Arnhold I.J."/>
            <person name="Bloise W."/>
            <person name="Wajchenberg B.L."/>
            <person name="Nicolau W."/>
            <person name="Sutcliffe R.G."/>
            <person name="Wallace A.M."/>
        </authorList>
    </citation>
    <scope>VARIANT AH2 THR-82</scope>
</reference>
<reference key="16">
    <citation type="journal article" date="1994" name="J. Mol. Endocrinol.">
        <title>Mutation in the human gene for 3 beta-hydroxysteroid dehydrogenase type II leading to male pseudohermaphroditism without salt loss.</title>
        <authorList>
            <person name="Russell A.J."/>
            <person name="Wallace A.M."/>
            <person name="Forest M.G."/>
            <person name="Donaldson M.D."/>
            <person name="Edwards C.R."/>
            <person name="Sutcliffe R.G."/>
        </authorList>
    </citation>
    <scope>VARIANT AH2 ARG-173</scope>
</reference>
<reference key="17">
    <citation type="journal article" date="1995" name="Biochemistry">
        <title>Identification and characterization of the G15D mutation found in a male patient with 3 beta-hydroxysteroid dehydrogenase (3 beta-HSD) deficiency: alteration of the putative NAD-binding domain of type II 3 beta-HSD.</title>
        <authorList>
            <person name="Rheaume E."/>
            <person name="Sanchez R."/>
            <person name="Mebarki F."/>
            <person name="Gagnon E."/>
            <person name="Carel J.-C."/>
            <person name="Chaussain J.-L."/>
            <person name="Morel Y."/>
            <person name="Labrie F."/>
            <person name="Simard J."/>
        </authorList>
    </citation>
    <scope>VARIANT AH2 ASP-15</scope>
</reference>
<reference key="18">
    <citation type="journal article" date="1995" name="Hum. Mol. Genet.">
        <title>A novel missense mutation in the type II 3 beta-hydroxysteroid dehydrogenase gene in a family with classical salt-wasting congenital adrenal hyperplasia due to 3 beta-hydroxysteroid dehydrogenase deficiency.</title>
        <authorList>
            <person name="Katsumata N."/>
            <person name="Tanae A."/>
            <person name="Yasunaga T."/>
            <person name="Horikawa R."/>
            <person name="Tanaka T."/>
            <person name="Hibi I."/>
        </authorList>
    </citation>
    <scope>VARIANT AH2 PRO-205</scope>
</reference>
<reference key="19">
    <citation type="journal article" date="1995" name="Hum. Mol. Genet.">
        <title>Molecular analysis of type II 3 beta-hydroxysteroid dehydrogenase gene in Japanese patients with classical 3 beta-hydroxysteroid dehydrogenase deficiency.</title>
        <authorList>
            <person name="Tajima T."/>
            <person name="Fujieda K."/>
            <person name="Nakae J."/>
            <person name="Shinohara N."/>
            <person name="Yoshimoto M."/>
            <person name="Baba T."/>
            <person name="Kinoshita E."/>
            <person name="Igarashi Y."/>
            <person name="Oomura T."/>
        </authorList>
    </citation>
    <scope>VARIANT AH2 ARG-259</scope>
</reference>
<reference key="20">
    <citation type="journal article" date="1995" name="J. Clin. Endocrinol. Metab.">
        <title>Nonsalt-losing male pseudohermaphroditism due to the novel homozygous N100S mutation in the type II 3 beta-hydroxysteroid dehydrogenase gene.</title>
        <authorList>
            <person name="Mebarki F."/>
            <person name="Sanchez R."/>
            <person name="Rheaume E."/>
            <person name="Laflamme N."/>
            <person name="Simard J."/>
            <person name="Forest M.G."/>
            <person name="Bey-Omar F."/>
            <person name="David M."/>
            <person name="Labrie F."/>
            <person name="Morel Y."/>
        </authorList>
    </citation>
    <scope>VARIANT AH2 SER-100</scope>
</reference>
<reference key="21">
    <citation type="journal article" date="1998" name="Mol. Genet. Metab.">
        <title>Variants of the type II 3beta-hydroxysteroid dehydrogenase gene in children with premature pubic hair and hyperandrogenic adolescents.</title>
        <authorList>
            <person name="Nayak S."/>
            <person name="Lee P.A."/>
            <person name="Witchel S.F."/>
        </authorList>
    </citation>
    <scope>VARIANT AH2 SER-236</scope>
</reference>
<reference key="22">
    <citation type="journal article" date="1999" name="J. Clin. Endocrinol. Metab.">
        <title>New insight into the molecular basis of 3beta-hydroxysteroid dehydrogenase deficiency: identification of eight mutations in the HSD3B2 gene in eleven patients from seven new families and comparison of the functional properties of twenty-five mutant enzymes.</title>
        <authorList>
            <person name="Moisan A.M."/>
            <person name="Ricketts M.L."/>
            <person name="Tardy V."/>
            <person name="Desrochers M."/>
            <person name="Mebarki F."/>
            <person name="Chaussain J.-L."/>
            <person name="Cabrol S."/>
            <person name="Raux-Demay M.C."/>
            <person name="Forest M.G."/>
            <person name="Sippell W.G."/>
            <person name="Peter M."/>
            <person name="Morel Y."/>
            <person name="Simard J."/>
        </authorList>
    </citation>
    <scope>VARIANTS AH2 GLU-10; VAL-10; ASP-15; THR-82; SER-100; TRP-108; ARG-129; LYS-142; LEU-155; VAL-167; ARG-173; LEU-186; PRO-205; GLY-213; GLU-216; GLN-222; HIS-222; SER-236; PRO-245; ASN-253; ASP-254; ARG-259; MET-259 AND VAL-294</scope>
</reference>
<reference key="23">
    <citation type="journal article" date="2000" name="Clin. Endocrinol. (Oxf.)">
        <title>Mutations in the type II 3beta-hydroxysteroid dehydrogenase (HSD3B2) gene can cause premature pubarche in girls.</title>
        <authorList>
            <person name="Marui S."/>
            <person name="Castro M."/>
            <person name="Latronico A.C."/>
            <person name="Elias L.L."/>
            <person name="Arnhold I.J."/>
            <person name="Moreira A.C."/>
            <person name="Mendonca B.B."/>
        </authorList>
    </citation>
    <scope>VARIANTS AH2 ARG-129; GLN-222 AND MET-259</scope>
</reference>
<reference key="24">
    <citation type="journal article" date="2000" name="J. Clin. Endocrinol. Metab.">
        <title>A novel A10E homozygous mutation in the HSD3B2 gene causing severe salt-wasting 3beta-hydroxysteroid dehydrogenase deficiency in 46,XX and 46,XY French-Canadians: evaluation of gonadal function after puberty.</title>
        <authorList>
            <person name="Alos N."/>
            <person name="Moisan A.M."/>
            <person name="Ward L."/>
            <person name="Desrochers M."/>
            <person name="Legault L."/>
            <person name="Leboeuf G."/>
            <person name="van Vliet G."/>
            <person name="Simard J."/>
        </authorList>
    </citation>
    <scope>VARIANT AH2 GLU-10</scope>
</reference>
<reference key="25">
    <citation type="journal article" date="2002" name="J. Clin. Endocrinol. Metab.">
        <title>A novel nonstop mutation in the stop codon and a novel missense mutation in the type II 3-beta-hydroxysteroid dehydrogenase (3-beta-HSD) gene causing, respectively, nonclassic and classic 3-beta-HSD deficiency congenital adrenal hyperplasia.</title>
        <authorList>
            <person name="Pang S."/>
            <person name="Wang W."/>
            <person name="Rich B."/>
            <person name="David R."/>
            <person name="Chang Y.T."/>
            <person name="Carbunaru G."/>
            <person name="Myers S.E."/>
            <person name="Howie A.F."/>
            <person name="Smillie K.J."/>
            <person name="Mason J.I."/>
        </authorList>
    </citation>
    <scope>VARIANTS AH2 LYS-142 AND THR-222</scope>
</reference>
<reference key="26">
    <citation type="journal article" date="2008" name="J. Clin. Endocrinol. Metab.">
        <title>Carboxyl-terminal mutations in 3beta-hydroxysteroid dehydrogenase type II cause severe salt-wasting congenital adrenal hyperplasia.</title>
        <authorList>
            <person name="Welzel M."/>
            <person name="Wustemann N."/>
            <person name="Simic-Schleicher G."/>
            <person name="Dorr H.G."/>
            <person name="Schulze E."/>
            <person name="Shaikh G."/>
            <person name="Clayton P."/>
            <person name="Grotzinger J."/>
            <person name="Holterhus P.M."/>
            <person name="Riepe F.G."/>
        </authorList>
    </citation>
    <scope>VARIANT AH2 LEU-341</scope>
    <scope>CHARACTERIZATION OF VARIANT AH2 LEU-341</scope>
</reference>
<reference key="27">
    <citation type="journal article" date="2012" name="Gene">
        <title>In silico structural, functional and pathogenicity evaluation of a novel mutation: an overview of HSD3B2 gene mutations.</title>
        <authorList>
            <person name="Rabbani B."/>
            <person name="Mahdieh N."/>
            <person name="Haghi Ashtiani M.T."/>
            <person name="Setoodeh A."/>
            <person name="Rabbani A."/>
        </authorList>
    </citation>
    <scope>VARIANT AH2 PRO-82</scope>
</reference>
<reference key="28">
    <citation type="journal article" date="2015" name="J. Clin. Endocrinol. Metab.">
        <title>A novel missense mutation in the HSD3B2 gene, underlying nonsalt-wasting congenital adrenal hyperplasia. new insight into the structure-function relationships of 3beta-hydroxysteroid dehidrogenase type II.</title>
        <authorList>
            <person name="Baquedano M.S."/>
            <person name="Ciaccio M."/>
            <person name="Marino R."/>
            <person name="Perez Garrido N."/>
            <person name="Ramirez P."/>
            <person name="Maceiras M."/>
            <person name="Turjanski A."/>
            <person name="Defelipe L.A."/>
            <person name="Rivarola M.A."/>
            <person name="Belgorosky A."/>
        </authorList>
    </citation>
    <scope>FUNCTION</scope>
    <scope>SUBCELLULAR LOCATION</scope>
    <scope>VARIANT AH2 VAL-250</scope>
    <scope>CHARACTERIZATION OF VARIANT AH2 VAL-250</scope>
    <scope>BIOPHYSICOCHEMICAL PROPERTIES</scope>
</reference>